<gene>
    <name evidence="1" type="primary">psb28</name>
    <name type="ordered locus">PMT9312_0874</name>
</gene>
<sequence length="117" mass="13202">MTANKTAKIQFYEGTDEPVVPEIRLTRSKDGTSGQALFQFEKPQALSSITDGEITGMRMIDAEGEILTREVKVKFVDGEPIFLEAVYIWKSTSDFDRFMRFANSYAKSNGLGYSEKK</sequence>
<feature type="chain" id="PRO_0000271562" description="Photosystem II reaction center Psb28 protein">
    <location>
        <begin position="1"/>
        <end position="117"/>
    </location>
</feature>
<organism>
    <name type="scientific">Prochlorococcus marinus (strain MIT 9312)</name>
    <dbReference type="NCBI Taxonomy" id="74546"/>
    <lineage>
        <taxon>Bacteria</taxon>
        <taxon>Bacillati</taxon>
        <taxon>Cyanobacteriota</taxon>
        <taxon>Cyanophyceae</taxon>
        <taxon>Synechococcales</taxon>
        <taxon>Prochlorococcaceae</taxon>
        <taxon>Prochlorococcus</taxon>
    </lineage>
</organism>
<comment type="subunit">
    <text evidence="1">Part of the photosystem II complex.</text>
</comment>
<comment type="subcellular location">
    <subcellularLocation>
        <location evidence="1">Cellular thylakoid membrane</location>
        <topology evidence="1">Peripheral membrane protein</topology>
        <orientation evidence="1">Cytoplasmic side</orientation>
    </subcellularLocation>
</comment>
<comment type="similarity">
    <text evidence="1">Belongs to the Psb28 family.</text>
</comment>
<proteinExistence type="inferred from homology"/>
<evidence type="ECO:0000255" key="1">
    <source>
        <dbReference type="HAMAP-Rule" id="MF_01370"/>
    </source>
</evidence>
<reference key="1">
    <citation type="journal article" date="2006" name="Science">
        <title>Genomic islands and the ecology and evolution of Prochlorococcus.</title>
        <authorList>
            <person name="Coleman M.L."/>
            <person name="Sullivan M.B."/>
            <person name="Martiny A.C."/>
            <person name="Steglich C."/>
            <person name="Barry K."/>
            <person name="Delong E.F."/>
            <person name="Chisholm S.W."/>
        </authorList>
    </citation>
    <scope>NUCLEOTIDE SEQUENCE [LARGE SCALE GENOMIC DNA]</scope>
    <source>
        <strain>MIT 9312</strain>
    </source>
</reference>
<protein>
    <recommendedName>
        <fullName evidence="1">Photosystem II reaction center Psb28 protein</fullName>
    </recommendedName>
    <alternativeName>
        <fullName evidence="1">Photosystem II 13 kDa protein</fullName>
    </alternativeName>
    <alternativeName>
        <fullName evidence="1">Photosystem II reaction center W protein</fullName>
    </alternativeName>
</protein>
<dbReference type="EMBL" id="CP000111">
    <property type="protein sequence ID" value="ABB49934.1"/>
    <property type="molecule type" value="Genomic_DNA"/>
</dbReference>
<dbReference type="RefSeq" id="WP_011376429.1">
    <property type="nucleotide sequence ID" value="NC_007577.1"/>
</dbReference>
<dbReference type="SMR" id="Q31B11"/>
<dbReference type="STRING" id="74546.PMT9312_0874"/>
<dbReference type="KEGG" id="pmi:PMT9312_0874"/>
<dbReference type="eggNOG" id="ENOG5031GDS">
    <property type="taxonomic scope" value="Bacteria"/>
</dbReference>
<dbReference type="HOGENOM" id="CLU_137323_1_0_3"/>
<dbReference type="OrthoDB" id="559598at2"/>
<dbReference type="Proteomes" id="UP000002715">
    <property type="component" value="Chromosome"/>
</dbReference>
<dbReference type="GO" id="GO:0009654">
    <property type="term" value="C:photosystem II oxygen evolving complex"/>
    <property type="evidence" value="ECO:0007669"/>
    <property type="project" value="InterPro"/>
</dbReference>
<dbReference type="GO" id="GO:0031676">
    <property type="term" value="C:plasma membrane-derived thylakoid membrane"/>
    <property type="evidence" value="ECO:0007669"/>
    <property type="project" value="UniProtKB-SubCell"/>
</dbReference>
<dbReference type="GO" id="GO:0015979">
    <property type="term" value="P:photosynthesis"/>
    <property type="evidence" value="ECO:0007669"/>
    <property type="project" value="UniProtKB-UniRule"/>
</dbReference>
<dbReference type="Gene3D" id="2.40.30.220">
    <property type="entry name" value="Photosystem II Psb28"/>
    <property type="match status" value="1"/>
</dbReference>
<dbReference type="HAMAP" id="MF_01370">
    <property type="entry name" value="PSII_Psb28"/>
    <property type="match status" value="1"/>
</dbReference>
<dbReference type="InterPro" id="IPR038676">
    <property type="entry name" value="Psb28_c1_sf"/>
</dbReference>
<dbReference type="InterPro" id="IPR005610">
    <property type="entry name" value="PSII_Psb28_class-1"/>
</dbReference>
<dbReference type="NCBIfam" id="TIGR03047">
    <property type="entry name" value="PS_II_psb28"/>
    <property type="match status" value="1"/>
</dbReference>
<dbReference type="PANTHER" id="PTHR34963">
    <property type="match status" value="1"/>
</dbReference>
<dbReference type="PANTHER" id="PTHR34963:SF2">
    <property type="entry name" value="PHOTOSYSTEM II REACTION CENTER PSB28 PROTEIN, CHLOROPLASTIC"/>
    <property type="match status" value="1"/>
</dbReference>
<dbReference type="Pfam" id="PF03912">
    <property type="entry name" value="Psb28"/>
    <property type="match status" value="1"/>
</dbReference>
<accession>Q31B11</accession>
<name>PSB28_PROM9</name>
<keyword id="KW-0472">Membrane</keyword>
<keyword id="KW-0602">Photosynthesis</keyword>
<keyword id="KW-0604">Photosystem II</keyword>
<keyword id="KW-0793">Thylakoid</keyword>